<dbReference type="EC" id="5.1.99.6"/>
<dbReference type="EMBL" id="GG666504">
    <property type="protein sequence ID" value="EEN61546.1"/>
    <property type="molecule type" value="Genomic_DNA"/>
</dbReference>
<dbReference type="RefSeq" id="XP_002605536.1">
    <property type="nucleotide sequence ID" value="XM_002605490.1"/>
</dbReference>
<dbReference type="SMR" id="C3YDS7"/>
<dbReference type="STRING" id="7739.C3YDS7"/>
<dbReference type="eggNOG" id="KOG2585">
    <property type="taxonomic scope" value="Eukaryota"/>
</dbReference>
<dbReference type="InParanoid" id="C3YDS7"/>
<dbReference type="Proteomes" id="UP000001554">
    <property type="component" value="Unplaced"/>
</dbReference>
<dbReference type="GO" id="GO:0005739">
    <property type="term" value="C:mitochondrion"/>
    <property type="evidence" value="ECO:0000318"/>
    <property type="project" value="GO_Central"/>
</dbReference>
<dbReference type="GO" id="GO:0046872">
    <property type="term" value="F:metal ion binding"/>
    <property type="evidence" value="ECO:0007669"/>
    <property type="project" value="UniProtKB-KW"/>
</dbReference>
<dbReference type="GO" id="GO:0052856">
    <property type="term" value="F:NAD(P)HX epimerase activity"/>
    <property type="evidence" value="ECO:0000318"/>
    <property type="project" value="GO_Central"/>
</dbReference>
<dbReference type="GO" id="GO:0000166">
    <property type="term" value="F:nucleotide binding"/>
    <property type="evidence" value="ECO:0007669"/>
    <property type="project" value="UniProtKB-KW"/>
</dbReference>
<dbReference type="FunFam" id="3.40.50.10260:FF:000002">
    <property type="entry name" value="NAD(P)H-hydrate epimerase"/>
    <property type="match status" value="1"/>
</dbReference>
<dbReference type="Gene3D" id="3.40.50.10260">
    <property type="entry name" value="YjeF N-terminal domain"/>
    <property type="match status" value="1"/>
</dbReference>
<dbReference type="HAMAP" id="MF_01966">
    <property type="entry name" value="NADHX_epimerase"/>
    <property type="match status" value="1"/>
</dbReference>
<dbReference type="InterPro" id="IPR004443">
    <property type="entry name" value="YjeF_N_dom"/>
</dbReference>
<dbReference type="InterPro" id="IPR036652">
    <property type="entry name" value="YjeF_N_dom_sf"/>
</dbReference>
<dbReference type="InterPro" id="IPR032976">
    <property type="entry name" value="YJEFN_prot_NAXE-like"/>
</dbReference>
<dbReference type="NCBIfam" id="TIGR00197">
    <property type="entry name" value="yjeF_nterm"/>
    <property type="match status" value="1"/>
</dbReference>
<dbReference type="PANTHER" id="PTHR13232">
    <property type="entry name" value="NAD(P)H-HYDRATE EPIMERASE"/>
    <property type="match status" value="1"/>
</dbReference>
<dbReference type="PANTHER" id="PTHR13232:SF10">
    <property type="entry name" value="NAD(P)H-HYDRATE EPIMERASE"/>
    <property type="match status" value="1"/>
</dbReference>
<dbReference type="Pfam" id="PF03853">
    <property type="entry name" value="YjeF_N"/>
    <property type="match status" value="1"/>
</dbReference>
<dbReference type="SUPFAM" id="SSF64153">
    <property type="entry name" value="YjeF N-terminal domain-like"/>
    <property type="match status" value="1"/>
</dbReference>
<dbReference type="PROSITE" id="PS51385">
    <property type="entry name" value="YJEF_N"/>
    <property type="match status" value="1"/>
</dbReference>
<accession>C3YDS7</accession>
<sequence length="273" mass="30292">MESWKGKYASGLRFSFRKRYSTEKGGTVDEDCEVISIGHKIGDISYVSQEEAQQIDQELFNEYAYSVDQLMELAGHSCAVALAKSYPLTSLKKDATVLVCCGPGNNGGDGLVCARHLKMFGYNPSVFYPKRTDKPLYKNLTIQCEQLDIPFLSHLPKPQLLSDGFSYIVDALFGFSFKGEVRPPFGDVLKTLKEVTVPICSIDVPSGWDVEGGNPDGLQPEFLISLTAPKKCAEKFAGRYHYLGGRFVPPGIIQKYELNLPTYPGTEPCIRLH</sequence>
<evidence type="ECO:0000255" key="1">
    <source>
        <dbReference type="HAMAP-Rule" id="MF_03159"/>
    </source>
</evidence>
<proteinExistence type="inferred from homology"/>
<comment type="function">
    <text evidence="1">Catalyzes the epimerization of the S- and R-forms of NAD(P)HX, a damaged form of NAD(P)H that is a result of enzymatic or heat-dependent hydration. This is a prerequisite for the S-specific NAD(P)H-hydrate dehydratase to allow the repair of both epimers of NAD(P)HX.</text>
</comment>
<comment type="catalytic activity">
    <reaction>
        <text>(6R)-NADHX = (6S)-NADHX</text>
        <dbReference type="Rhea" id="RHEA:32215"/>
        <dbReference type="ChEBI" id="CHEBI:64074"/>
        <dbReference type="ChEBI" id="CHEBI:64075"/>
        <dbReference type="EC" id="5.1.99.6"/>
    </reaction>
</comment>
<comment type="catalytic activity">
    <reaction>
        <text>(6R)-NADPHX = (6S)-NADPHX</text>
        <dbReference type="Rhea" id="RHEA:32227"/>
        <dbReference type="ChEBI" id="CHEBI:64076"/>
        <dbReference type="ChEBI" id="CHEBI:64077"/>
        <dbReference type="EC" id="5.1.99.6"/>
    </reaction>
</comment>
<comment type="cofactor">
    <cofactor evidence="1">
        <name>K(+)</name>
        <dbReference type="ChEBI" id="CHEBI:29103"/>
    </cofactor>
    <text evidence="1">Binds 1 potassium ion per subunit.</text>
</comment>
<comment type="similarity">
    <text evidence="1">Belongs to the NnrE/AIBP family.</text>
</comment>
<feature type="chain" id="PRO_0000416314" description="NAD(P)H-hydrate epimerase">
    <location>
        <begin position="1"/>
        <end position="273"/>
    </location>
</feature>
<feature type="domain" description="YjeF N-terminal" evidence="1">
    <location>
        <begin position="52"/>
        <end position="260"/>
    </location>
</feature>
<feature type="binding site" evidence="1">
    <location>
        <begin position="105"/>
        <end position="109"/>
    </location>
    <ligand>
        <name>(6S)-NADPHX</name>
        <dbReference type="ChEBI" id="CHEBI:64076"/>
    </ligand>
</feature>
<feature type="binding site" evidence="1">
    <location>
        <position position="106"/>
    </location>
    <ligand>
        <name>K(+)</name>
        <dbReference type="ChEBI" id="CHEBI:29103"/>
    </ligand>
</feature>
<feature type="binding site" evidence="1">
    <location>
        <position position="170"/>
    </location>
    <ligand>
        <name>K(+)</name>
        <dbReference type="ChEBI" id="CHEBI:29103"/>
    </ligand>
</feature>
<feature type="binding site" evidence="1">
    <location>
        <begin position="174"/>
        <end position="180"/>
    </location>
    <ligand>
        <name>(6S)-NADPHX</name>
        <dbReference type="ChEBI" id="CHEBI:64076"/>
    </ligand>
</feature>
<feature type="binding site" evidence="1">
    <location>
        <position position="203"/>
    </location>
    <ligand>
        <name>(6S)-NADPHX</name>
        <dbReference type="ChEBI" id="CHEBI:64076"/>
    </ligand>
</feature>
<feature type="binding site" evidence="1">
    <location>
        <position position="206"/>
    </location>
    <ligand>
        <name>K(+)</name>
        <dbReference type="ChEBI" id="CHEBI:29103"/>
    </ligand>
</feature>
<protein>
    <recommendedName>
        <fullName evidence="1">NAD(P)H-hydrate epimerase</fullName>
        <ecNumber>5.1.99.6</ecNumber>
    </recommendedName>
    <alternativeName>
        <fullName evidence="1">NAD(P)HX epimerase</fullName>
    </alternativeName>
</protein>
<name>NNRE_BRAFL</name>
<reference key="1">
    <citation type="journal article" date="2008" name="Nature">
        <title>The amphioxus genome and the evolution of the chordate karyotype.</title>
        <authorList>
            <person name="Putnam N.H."/>
            <person name="Butts T."/>
            <person name="Ferrier D.E.K."/>
            <person name="Furlong R.F."/>
            <person name="Hellsten U."/>
            <person name="Kawashima T."/>
            <person name="Robinson-Rechavi M."/>
            <person name="Shoguchi E."/>
            <person name="Terry A."/>
            <person name="Yu J.-K."/>
            <person name="Benito-Gutierrez E.L."/>
            <person name="Dubchak I."/>
            <person name="Garcia-Fernandez J."/>
            <person name="Gibson-Brown J.J."/>
            <person name="Grigoriev I.V."/>
            <person name="Horton A.C."/>
            <person name="de Jong P.J."/>
            <person name="Jurka J."/>
            <person name="Kapitonov V.V."/>
            <person name="Kohara Y."/>
            <person name="Kuroki Y."/>
            <person name="Lindquist E."/>
            <person name="Lucas S."/>
            <person name="Osoegawa K."/>
            <person name="Pennacchio L.A."/>
            <person name="Salamov A.A."/>
            <person name="Satou Y."/>
            <person name="Sauka-Spengler T."/>
            <person name="Schmutz J."/>
            <person name="Shin-I T."/>
            <person name="Toyoda A."/>
            <person name="Bronner-Fraser M."/>
            <person name="Fujiyama A."/>
            <person name="Holland L.Z."/>
            <person name="Holland P.W.H."/>
            <person name="Satoh N."/>
            <person name="Rokhsar D.S."/>
        </authorList>
    </citation>
    <scope>NUCLEOTIDE SEQUENCE [LARGE SCALE GENOMIC DNA]</scope>
    <source>
        <strain>S238N-H82</strain>
        <tissue>Testis</tissue>
    </source>
</reference>
<organism>
    <name type="scientific">Branchiostoma floridae</name>
    <name type="common">Florida lancelet</name>
    <name type="synonym">Amphioxus</name>
    <dbReference type="NCBI Taxonomy" id="7739"/>
    <lineage>
        <taxon>Eukaryota</taxon>
        <taxon>Metazoa</taxon>
        <taxon>Chordata</taxon>
        <taxon>Cephalochordata</taxon>
        <taxon>Leptocardii</taxon>
        <taxon>Amphioxiformes</taxon>
        <taxon>Branchiostomatidae</taxon>
        <taxon>Branchiostoma</taxon>
    </lineage>
</organism>
<gene>
    <name type="ORF">BRAFLDRAFT_104103</name>
</gene>
<keyword id="KW-0413">Isomerase</keyword>
<keyword id="KW-0479">Metal-binding</keyword>
<keyword id="KW-0520">NAD</keyword>
<keyword id="KW-0521">NADP</keyword>
<keyword id="KW-0547">Nucleotide-binding</keyword>
<keyword id="KW-0630">Potassium</keyword>
<keyword id="KW-1185">Reference proteome</keyword>